<reference key="1">
    <citation type="journal article" date="2009" name="BMC Genomics">
        <title>Evidence for niche adaptation in the genome of the bovine pathogen Streptococcus uberis.</title>
        <authorList>
            <person name="Ward P.N."/>
            <person name="Holden M.T.G."/>
            <person name="Leigh J.A."/>
            <person name="Lennard N."/>
            <person name="Bignell A."/>
            <person name="Barron A."/>
            <person name="Clark L."/>
            <person name="Quail M.A."/>
            <person name="Woodward J."/>
            <person name="Barrell B.G."/>
            <person name="Egan S.A."/>
            <person name="Field T.R."/>
            <person name="Maskell D."/>
            <person name="Kehoe M."/>
            <person name="Dowson C.G."/>
            <person name="Chanter N."/>
            <person name="Whatmore A.M."/>
            <person name="Bentley S.D."/>
            <person name="Parkhill J."/>
        </authorList>
    </citation>
    <scope>NUCLEOTIDE SEQUENCE [LARGE SCALE GENOMIC DNA]</scope>
    <source>
        <strain>ATCC BAA-854 / 0140J</strain>
    </source>
</reference>
<feature type="chain" id="PRO_1000191823" description="Transcriptional repressor NrdR">
    <location>
        <begin position="1"/>
        <end position="164"/>
    </location>
</feature>
<feature type="domain" description="ATP-cone" evidence="1">
    <location>
        <begin position="49"/>
        <end position="139"/>
    </location>
</feature>
<feature type="zinc finger region" evidence="1">
    <location>
        <begin position="3"/>
        <end position="34"/>
    </location>
</feature>
<sequence>MRCPKCNYNKSSVVDSRQAEDGNTIRRRRECEKCHTRFTTFERLEELPLLVVKKDGTREQFSRDKILNGVVQSAQKRPVSSTDIENLISRIEQKVRANYENEVSSTAIGNLVMEELAELDEITYVRFASVYKSFKDVDEIEALLQQITNRVRGKKKSSIDDETH</sequence>
<comment type="function">
    <text evidence="1">Negatively regulates transcription of bacterial ribonucleotide reductase nrd genes and operons by binding to NrdR-boxes.</text>
</comment>
<comment type="cofactor">
    <cofactor evidence="1">
        <name>Zn(2+)</name>
        <dbReference type="ChEBI" id="CHEBI:29105"/>
    </cofactor>
    <text evidence="1">Binds 1 zinc ion.</text>
</comment>
<comment type="similarity">
    <text evidence="1">Belongs to the NrdR family.</text>
</comment>
<gene>
    <name evidence="1" type="primary">nrdR</name>
    <name type="ordered locus">SUB0381</name>
</gene>
<organism>
    <name type="scientific">Streptococcus uberis (strain ATCC BAA-854 / 0140J)</name>
    <dbReference type="NCBI Taxonomy" id="218495"/>
    <lineage>
        <taxon>Bacteria</taxon>
        <taxon>Bacillati</taxon>
        <taxon>Bacillota</taxon>
        <taxon>Bacilli</taxon>
        <taxon>Lactobacillales</taxon>
        <taxon>Streptococcaceae</taxon>
        <taxon>Streptococcus</taxon>
    </lineage>
</organism>
<evidence type="ECO:0000255" key="1">
    <source>
        <dbReference type="HAMAP-Rule" id="MF_00440"/>
    </source>
</evidence>
<proteinExistence type="inferred from homology"/>
<name>NRDR_STRU0</name>
<keyword id="KW-0067">ATP-binding</keyword>
<keyword id="KW-0238">DNA-binding</keyword>
<keyword id="KW-0479">Metal-binding</keyword>
<keyword id="KW-0547">Nucleotide-binding</keyword>
<keyword id="KW-1185">Reference proteome</keyword>
<keyword id="KW-0678">Repressor</keyword>
<keyword id="KW-0804">Transcription</keyword>
<keyword id="KW-0805">Transcription regulation</keyword>
<keyword id="KW-0862">Zinc</keyword>
<keyword id="KW-0863">Zinc-finger</keyword>
<dbReference type="EMBL" id="AM946015">
    <property type="protein sequence ID" value="CAR40999.1"/>
    <property type="molecule type" value="Genomic_DNA"/>
</dbReference>
<dbReference type="RefSeq" id="WP_012657916.1">
    <property type="nucleotide sequence ID" value="NC_012004.1"/>
</dbReference>
<dbReference type="SMR" id="B9DTQ0"/>
<dbReference type="STRING" id="218495.SUB0381"/>
<dbReference type="GeneID" id="93825683"/>
<dbReference type="KEGG" id="sub:SUB0381"/>
<dbReference type="eggNOG" id="COG1327">
    <property type="taxonomic scope" value="Bacteria"/>
</dbReference>
<dbReference type="HOGENOM" id="CLU_108412_0_0_9"/>
<dbReference type="OrthoDB" id="9807461at2"/>
<dbReference type="Proteomes" id="UP000000449">
    <property type="component" value="Chromosome"/>
</dbReference>
<dbReference type="GO" id="GO:0005524">
    <property type="term" value="F:ATP binding"/>
    <property type="evidence" value="ECO:0007669"/>
    <property type="project" value="UniProtKB-KW"/>
</dbReference>
<dbReference type="GO" id="GO:0003677">
    <property type="term" value="F:DNA binding"/>
    <property type="evidence" value="ECO:0007669"/>
    <property type="project" value="UniProtKB-KW"/>
</dbReference>
<dbReference type="GO" id="GO:0008270">
    <property type="term" value="F:zinc ion binding"/>
    <property type="evidence" value="ECO:0007669"/>
    <property type="project" value="UniProtKB-UniRule"/>
</dbReference>
<dbReference type="GO" id="GO:0045892">
    <property type="term" value="P:negative regulation of DNA-templated transcription"/>
    <property type="evidence" value="ECO:0007669"/>
    <property type="project" value="UniProtKB-UniRule"/>
</dbReference>
<dbReference type="HAMAP" id="MF_00440">
    <property type="entry name" value="NrdR"/>
    <property type="match status" value="1"/>
</dbReference>
<dbReference type="InterPro" id="IPR005144">
    <property type="entry name" value="ATP-cone_dom"/>
</dbReference>
<dbReference type="InterPro" id="IPR055173">
    <property type="entry name" value="NrdR-like_N"/>
</dbReference>
<dbReference type="InterPro" id="IPR003796">
    <property type="entry name" value="RNR_NrdR-like"/>
</dbReference>
<dbReference type="NCBIfam" id="TIGR00244">
    <property type="entry name" value="transcriptional regulator NrdR"/>
    <property type="match status" value="1"/>
</dbReference>
<dbReference type="PANTHER" id="PTHR30455">
    <property type="entry name" value="TRANSCRIPTIONAL REPRESSOR NRDR"/>
    <property type="match status" value="1"/>
</dbReference>
<dbReference type="PANTHER" id="PTHR30455:SF2">
    <property type="entry name" value="TRANSCRIPTIONAL REPRESSOR NRDR"/>
    <property type="match status" value="1"/>
</dbReference>
<dbReference type="Pfam" id="PF03477">
    <property type="entry name" value="ATP-cone"/>
    <property type="match status" value="1"/>
</dbReference>
<dbReference type="Pfam" id="PF22811">
    <property type="entry name" value="Zn_ribbon_NrdR"/>
    <property type="match status" value="1"/>
</dbReference>
<dbReference type="PROSITE" id="PS51161">
    <property type="entry name" value="ATP_CONE"/>
    <property type="match status" value="1"/>
</dbReference>
<accession>B9DTQ0</accession>
<protein>
    <recommendedName>
        <fullName evidence="1">Transcriptional repressor NrdR</fullName>
    </recommendedName>
</protein>